<organism>
    <name type="scientific">Bos taurus</name>
    <name type="common">Bovine</name>
    <dbReference type="NCBI Taxonomy" id="9913"/>
    <lineage>
        <taxon>Eukaryota</taxon>
        <taxon>Metazoa</taxon>
        <taxon>Chordata</taxon>
        <taxon>Craniata</taxon>
        <taxon>Vertebrata</taxon>
        <taxon>Euteleostomi</taxon>
        <taxon>Mammalia</taxon>
        <taxon>Eutheria</taxon>
        <taxon>Laurasiatheria</taxon>
        <taxon>Artiodactyla</taxon>
        <taxon>Ruminantia</taxon>
        <taxon>Pecora</taxon>
        <taxon>Bovidae</taxon>
        <taxon>Bovinae</taxon>
        <taxon>Bos</taxon>
    </lineage>
</organism>
<evidence type="ECO:0000250" key="1">
    <source>
        <dbReference type="UniProtKB" id="Q6P3D0"/>
    </source>
</evidence>
<evidence type="ECO:0000250" key="2">
    <source>
        <dbReference type="UniProtKB" id="Q6TEC1"/>
    </source>
</evidence>
<evidence type="ECO:0000250" key="3">
    <source>
        <dbReference type="UniProtKB" id="Q96DE0"/>
    </source>
</evidence>
<evidence type="ECO:0000255" key="4">
    <source>
        <dbReference type="PROSITE-ProRule" id="PRU00794"/>
    </source>
</evidence>
<evidence type="ECO:0000305" key="5"/>
<keyword id="KW-0963">Cytoplasm</keyword>
<keyword id="KW-0378">Hydrolase</keyword>
<keyword id="KW-0460">Magnesium</keyword>
<keyword id="KW-0464">Manganese</keyword>
<keyword id="KW-0479">Metal-binding</keyword>
<keyword id="KW-0546">Nucleotide metabolism</keyword>
<keyword id="KW-0547">Nucleotide-binding</keyword>
<keyword id="KW-0539">Nucleus</keyword>
<keyword id="KW-1185">Reference proteome</keyword>
<keyword id="KW-0694">RNA-binding</keyword>
<accession>A1A4Q9</accession>
<reference key="1">
    <citation type="submission" date="2006-10" db="EMBL/GenBank/DDBJ databases">
        <authorList>
            <consortium name="NIH - Mammalian Gene Collection (MGC) project"/>
        </authorList>
    </citation>
    <scope>NUCLEOTIDE SEQUENCE [LARGE SCALE MRNA]</scope>
    <source>
        <strain>Hereford</strain>
        <tissue>Fetal cerebellum</tissue>
    </source>
</reference>
<comment type="function">
    <text evidence="1 3">RNA-binding and decapping enzyme that catalyzes the cleavage of the cap structure of snoRNAs and mRNAs in a metal-dependent manner. Part of the U8 snoRNP complex that is required for the accumulation of mature 5.8S and 28S rRNA. Has diphosphatase activity and removes m7G and/or m227G caps from U8 snoRNA and leaves a 5'monophosphate on the RNA. Also catalyzes the cleavage of the cap structure on mRNAs. Does not hydrolyze cap analog structures like 7-methylguanosine nucleoside triphosphate (m7GpppG). Also hydrolysis m7G- and m227G U3-capped RNAs but with less efficiencies. Has broad substrate specificity with manganese or cobalt as cofactor and can act on various RNA species. Binds to the U8 snoRNA; metal is not required for RNA-binding. May play a role in the regulation of snoRNAs and mRNAs degradation. Also acts as a phosphatase; hydrolyzes the non-canonical purine nucleotides inosine diphosphate (IDP) and deoxyinosine diphosphate (dITP) as well as guanosine diphosphate (GDP), deoxyguanosine diphosphate (dGDP), xanthine diphosphate (XDP), inosine triphosphate (ITP) and deoxyinosine triphosphate (ITP) to their respective monophosphate derivatives and does not distinguish between the deoxy- and ribose forms. The order of activity with different substrates is IDP &gt; dIDP &gt;&gt; GDP = dGDP &gt; XDP = ITP = dITP. Binds strongly to GTP, ITP and XTP. Participates in the hydrolysis of dIDP/IDP and probably excludes non-canonical purines from RNA and DNA precursor pools, thus preventing their incorporation into RNA and DNA and avoiding chromosomal lesions (By similarity). Exhibits decapping activity towards NAD-capped RNAs and FAD-capped RNAs (By similarity). Exhibits decapping activity towards dpCoA-capped RNAs in vitro (By similarity).</text>
</comment>
<comment type="catalytic activity">
    <reaction evidence="3">
        <text>a 5'-end (N(7)-methyl 5'-triphosphoguanosine)-ribonucleoside in mRNA + H2O = N(7)-methyl-GDP + a 5'-end phospho-ribonucleoside in mRNA + 2 H(+)</text>
        <dbReference type="Rhea" id="RHEA:67484"/>
        <dbReference type="Rhea" id="RHEA-COMP:15692"/>
        <dbReference type="Rhea" id="RHEA-COMP:17167"/>
        <dbReference type="ChEBI" id="CHEBI:15377"/>
        <dbReference type="ChEBI" id="CHEBI:15378"/>
        <dbReference type="ChEBI" id="CHEBI:63714"/>
        <dbReference type="ChEBI" id="CHEBI:138282"/>
        <dbReference type="ChEBI" id="CHEBI:156461"/>
        <dbReference type="EC" id="3.6.1.62"/>
    </reaction>
    <physiologicalReaction direction="left-to-right" evidence="3">
        <dbReference type="Rhea" id="RHEA:67485"/>
    </physiologicalReaction>
</comment>
<comment type="catalytic activity">
    <reaction evidence="3">
        <text>IDP + H2O = IMP + phosphate + H(+)</text>
        <dbReference type="Rhea" id="RHEA:35207"/>
        <dbReference type="ChEBI" id="CHEBI:15377"/>
        <dbReference type="ChEBI" id="CHEBI:15378"/>
        <dbReference type="ChEBI" id="CHEBI:43474"/>
        <dbReference type="ChEBI" id="CHEBI:58053"/>
        <dbReference type="ChEBI" id="CHEBI:58280"/>
        <dbReference type="EC" id="3.6.1.64"/>
    </reaction>
    <physiologicalReaction direction="left-to-right" evidence="3">
        <dbReference type="Rhea" id="RHEA:35208"/>
    </physiologicalReaction>
</comment>
<comment type="catalytic activity">
    <reaction evidence="3">
        <text>dIDP + H2O = dIMP + phosphate + H(+)</text>
        <dbReference type="Rhea" id="RHEA:35211"/>
        <dbReference type="ChEBI" id="CHEBI:15377"/>
        <dbReference type="ChEBI" id="CHEBI:15378"/>
        <dbReference type="ChEBI" id="CHEBI:43474"/>
        <dbReference type="ChEBI" id="CHEBI:61194"/>
        <dbReference type="ChEBI" id="CHEBI:62286"/>
        <dbReference type="EC" id="3.6.1.64"/>
    </reaction>
    <physiologicalReaction direction="left-to-right" evidence="3">
        <dbReference type="Rhea" id="RHEA:35212"/>
    </physiologicalReaction>
</comment>
<comment type="catalytic activity">
    <reaction evidence="3">
        <text>a 5'-end NAD(+)-phospho-ribonucleoside in mRNA + H2O = a 5'-end phospho-ribonucleoside in mRNA + NAD(+) + H(+)</text>
        <dbReference type="Rhea" id="RHEA:60880"/>
        <dbReference type="Rhea" id="RHEA-COMP:15692"/>
        <dbReference type="Rhea" id="RHEA-COMP:15698"/>
        <dbReference type="ChEBI" id="CHEBI:15377"/>
        <dbReference type="ChEBI" id="CHEBI:15378"/>
        <dbReference type="ChEBI" id="CHEBI:57540"/>
        <dbReference type="ChEBI" id="CHEBI:138282"/>
        <dbReference type="ChEBI" id="CHEBI:144029"/>
    </reaction>
    <physiologicalReaction direction="left-to-right" evidence="3">
        <dbReference type="Rhea" id="RHEA:60881"/>
    </physiologicalReaction>
</comment>
<comment type="catalytic activity">
    <reaction evidence="3">
        <text>a 5'-end FAD-phospho-ribonucleoside in mRNA + H2O = a 5'-end phospho-adenosine-phospho-ribonucleoside in mRNA + FMN + 2 H(+)</text>
        <dbReference type="Rhea" id="RHEA:67588"/>
        <dbReference type="Rhea" id="RHEA-COMP:15719"/>
        <dbReference type="Rhea" id="RHEA-COMP:17275"/>
        <dbReference type="ChEBI" id="CHEBI:15377"/>
        <dbReference type="ChEBI" id="CHEBI:15378"/>
        <dbReference type="ChEBI" id="CHEBI:58210"/>
        <dbReference type="ChEBI" id="CHEBI:144051"/>
        <dbReference type="ChEBI" id="CHEBI:172372"/>
    </reaction>
    <physiologicalReaction direction="left-to-right" evidence="3">
        <dbReference type="Rhea" id="RHEA:67589"/>
    </physiologicalReaction>
</comment>
<comment type="catalytic activity">
    <reaction evidence="1">
        <text>a 5'-end CoA-ribonucleoside in mRNA + H2O = a 5'-end phospho-adenosine-phospho-ribonucleoside in mRNA + (R)-4'-phosphopantetheine + 2 H(+)</text>
        <dbReference type="Rhea" id="RHEA:67592"/>
        <dbReference type="Rhea" id="RHEA-COMP:15719"/>
        <dbReference type="Rhea" id="RHEA-COMP:17276"/>
        <dbReference type="ChEBI" id="CHEBI:15377"/>
        <dbReference type="ChEBI" id="CHEBI:15378"/>
        <dbReference type="ChEBI" id="CHEBI:61723"/>
        <dbReference type="ChEBI" id="CHEBI:144051"/>
        <dbReference type="ChEBI" id="CHEBI:172371"/>
    </reaction>
    <physiologicalReaction direction="left-to-right" evidence="1">
        <dbReference type="Rhea" id="RHEA:67593"/>
    </physiologicalReaction>
</comment>
<comment type="cofactor">
    <cofactor evidence="3">
        <name>Mg(2+)</name>
        <dbReference type="ChEBI" id="CHEBI:18420"/>
    </cofactor>
    <cofactor evidence="3">
        <name>Mn(2+)</name>
        <dbReference type="ChEBI" id="CHEBI:29035"/>
    </cofactor>
    <cofactor evidence="3">
        <name>Co(2+)</name>
        <dbReference type="ChEBI" id="CHEBI:48828"/>
    </cofactor>
    <text evidence="3">Binds 3 or 4 divalent metal cations. Acts specifically on U8 snoRNA with magnesium as cofactor. Has broad substrate specificity with bound manganese or cobalt (in vitro).</text>
</comment>
<comment type="subunit">
    <text evidence="3">Homodimer.</text>
</comment>
<comment type="subcellular location">
    <subcellularLocation>
        <location evidence="3">Nucleus</location>
    </subcellularLocation>
    <subcellularLocation>
        <location evidence="2">Nucleus</location>
        <location evidence="2">Nucleolus</location>
    </subcellularLocation>
    <subcellularLocation>
        <location evidence="2">Nucleus</location>
        <location evidence="2">Nucleoplasm</location>
    </subcellularLocation>
    <subcellularLocation>
        <location evidence="3">Cytoplasm</location>
    </subcellularLocation>
    <text evidence="2 3">Localized predominantly in the cytoplasm. Localized in nucleolus, and in a minor proportion in distinct foci in the nucleoplasm.</text>
</comment>
<comment type="similarity">
    <text evidence="5">Belongs to the Nudix hydrolase family. NUDT16 subfamily.</text>
</comment>
<name>NUD16_BOVIN</name>
<proteinExistence type="evidence at transcript level"/>
<dbReference type="EC" id="3.6.1.62" evidence="3"/>
<dbReference type="EC" id="3.6.1.64" evidence="3"/>
<dbReference type="EMBL" id="BC126814">
    <property type="protein sequence ID" value="AAI26815.1"/>
    <property type="molecule type" value="mRNA"/>
</dbReference>
<dbReference type="RefSeq" id="XP_005202022.1">
    <property type="nucleotide sequence ID" value="XM_005201965.4"/>
</dbReference>
<dbReference type="SMR" id="A1A4Q9"/>
<dbReference type="FunCoup" id="A1A4Q9">
    <property type="interactions" value="422"/>
</dbReference>
<dbReference type="STRING" id="9913.ENSBTAP00000024966"/>
<dbReference type="PaxDb" id="9913-ENSBTAP00000024966"/>
<dbReference type="GeneID" id="512320"/>
<dbReference type="CTD" id="131870"/>
<dbReference type="VEuPathDB" id="HostDB:ENSBTAG00000018749"/>
<dbReference type="eggNOG" id="ENOG502TAG2">
    <property type="taxonomic scope" value="Eukaryota"/>
</dbReference>
<dbReference type="HOGENOM" id="CLU_110418_0_1_1"/>
<dbReference type="InParanoid" id="A1A4Q9"/>
<dbReference type="OMA" id="VVLMQMR"/>
<dbReference type="OrthoDB" id="5950381at2759"/>
<dbReference type="Reactome" id="R-BTA-2393930">
    <property type="pathway name" value="Phosphate bond hydrolysis by NUDT proteins"/>
</dbReference>
<dbReference type="Proteomes" id="UP000009136">
    <property type="component" value="Chromosome 1"/>
</dbReference>
<dbReference type="Bgee" id="ENSBTAG00000018749">
    <property type="expression patterns" value="Expressed in anterior segment of eyeball and 107 other cell types or tissues"/>
</dbReference>
<dbReference type="GO" id="GO:0005737">
    <property type="term" value="C:cytoplasm"/>
    <property type="evidence" value="ECO:0000250"/>
    <property type="project" value="UniProtKB"/>
</dbReference>
<dbReference type="GO" id="GO:0005730">
    <property type="term" value="C:nucleolus"/>
    <property type="evidence" value="ECO:0000250"/>
    <property type="project" value="UniProtKB"/>
</dbReference>
<dbReference type="GO" id="GO:0005654">
    <property type="term" value="C:nucleoplasm"/>
    <property type="evidence" value="ECO:0007669"/>
    <property type="project" value="UniProtKB-SubCell"/>
</dbReference>
<dbReference type="GO" id="GO:0005634">
    <property type="term" value="C:nucleus"/>
    <property type="evidence" value="ECO:0000250"/>
    <property type="project" value="UniProtKB"/>
</dbReference>
<dbReference type="GO" id="GO:0140933">
    <property type="term" value="F:5'-(N(7)-methylguanosine 5'-triphospho)-[mRNA] hydrolase activity"/>
    <property type="evidence" value="ECO:0000250"/>
    <property type="project" value="UniProtKB"/>
</dbReference>
<dbReference type="GO" id="GO:0050897">
    <property type="term" value="F:cobalt ion binding"/>
    <property type="evidence" value="ECO:0000250"/>
    <property type="project" value="UniProtKB"/>
</dbReference>
<dbReference type="GO" id="GO:0097383">
    <property type="term" value="F:dIDP phosphatase activity"/>
    <property type="evidence" value="ECO:0000250"/>
    <property type="project" value="UniProtKB"/>
</dbReference>
<dbReference type="GO" id="GO:0035870">
    <property type="term" value="F:dITP diphosphatase activity"/>
    <property type="evidence" value="ECO:0000250"/>
    <property type="project" value="UniProtKB"/>
</dbReference>
<dbReference type="GO" id="GO:1990003">
    <property type="term" value="F:IDP phosphatase activity"/>
    <property type="evidence" value="ECO:0000250"/>
    <property type="project" value="UniProtKB"/>
</dbReference>
<dbReference type="GO" id="GO:0000287">
    <property type="term" value="F:magnesium ion binding"/>
    <property type="evidence" value="ECO:0000250"/>
    <property type="project" value="UniProtKB"/>
</dbReference>
<dbReference type="GO" id="GO:0030145">
    <property type="term" value="F:manganese ion binding"/>
    <property type="evidence" value="ECO:0000250"/>
    <property type="project" value="UniProtKB"/>
</dbReference>
<dbReference type="GO" id="GO:0008235">
    <property type="term" value="F:metalloexopeptidase activity"/>
    <property type="evidence" value="ECO:0000250"/>
    <property type="project" value="UniProtKB"/>
</dbReference>
<dbReference type="GO" id="GO:0003729">
    <property type="term" value="F:mRNA binding"/>
    <property type="evidence" value="ECO:0000250"/>
    <property type="project" value="UniProtKB"/>
</dbReference>
<dbReference type="GO" id="GO:0000166">
    <property type="term" value="F:nucleotide binding"/>
    <property type="evidence" value="ECO:0007669"/>
    <property type="project" value="UniProtKB-KW"/>
</dbReference>
<dbReference type="GO" id="GO:1990174">
    <property type="term" value="F:phosphodiesterase decapping endonuclease activity"/>
    <property type="evidence" value="ECO:0000318"/>
    <property type="project" value="GO_Central"/>
</dbReference>
<dbReference type="GO" id="GO:0042803">
    <property type="term" value="F:protein homodimerization activity"/>
    <property type="evidence" value="ECO:0000250"/>
    <property type="project" value="UniProtKB"/>
</dbReference>
<dbReference type="GO" id="GO:0110152">
    <property type="term" value="F:RNA NAD+-cap (NAD+-forming) hydrolase activity"/>
    <property type="evidence" value="ECO:0007669"/>
    <property type="project" value="RHEA"/>
</dbReference>
<dbReference type="GO" id="GO:0030515">
    <property type="term" value="F:snoRNA binding"/>
    <property type="evidence" value="ECO:0000250"/>
    <property type="project" value="UniProtKB"/>
</dbReference>
<dbReference type="GO" id="GO:0035863">
    <property type="term" value="P:dITP catabolic process"/>
    <property type="evidence" value="ECO:0000250"/>
    <property type="project" value="UniProtKB"/>
</dbReference>
<dbReference type="GO" id="GO:0006402">
    <property type="term" value="P:mRNA catabolic process"/>
    <property type="evidence" value="ECO:0000250"/>
    <property type="project" value="UniProtKB"/>
</dbReference>
<dbReference type="GO" id="GO:0110155">
    <property type="term" value="P:NAD-cap decapping"/>
    <property type="evidence" value="ECO:0000250"/>
    <property type="project" value="UniProtKB"/>
</dbReference>
<dbReference type="GO" id="GO:2000233">
    <property type="term" value="P:negative regulation of rRNA processing"/>
    <property type="evidence" value="ECO:0000250"/>
    <property type="project" value="UniProtKB"/>
</dbReference>
<dbReference type="GO" id="GO:0090068">
    <property type="term" value="P:positive regulation of cell cycle process"/>
    <property type="evidence" value="ECO:0000250"/>
    <property type="project" value="UniProtKB"/>
</dbReference>
<dbReference type="GO" id="GO:0016077">
    <property type="term" value="P:sno(s)RNA catabolic process"/>
    <property type="evidence" value="ECO:0000250"/>
    <property type="project" value="UniProtKB"/>
</dbReference>
<dbReference type="CDD" id="cd18869">
    <property type="entry name" value="NUDIX_U8_SnoRNA_DE_Nudt16"/>
    <property type="match status" value="1"/>
</dbReference>
<dbReference type="FunFam" id="3.90.79.10:FF:000055">
    <property type="entry name" value="U8 snoRNA-decapping enzyme"/>
    <property type="match status" value="1"/>
</dbReference>
<dbReference type="Gene3D" id="3.90.79.10">
    <property type="entry name" value="Nucleoside Triphosphate Pyrophosphohydrolase"/>
    <property type="match status" value="1"/>
</dbReference>
<dbReference type="InterPro" id="IPR015797">
    <property type="entry name" value="NUDIX_hydrolase-like_dom_sf"/>
</dbReference>
<dbReference type="InterPro" id="IPR000086">
    <property type="entry name" value="NUDIX_hydrolase_dom"/>
</dbReference>
<dbReference type="InterPro" id="IPR054754">
    <property type="entry name" value="NudT16"/>
</dbReference>
<dbReference type="PANTHER" id="PTHR31699">
    <property type="entry name" value="NUDIX T16 FAMILY MEMBER"/>
    <property type="match status" value="1"/>
</dbReference>
<dbReference type="PANTHER" id="PTHR31699:SF5">
    <property type="entry name" value="U8 SNORNA-DECAPPING ENZYME"/>
    <property type="match status" value="1"/>
</dbReference>
<dbReference type="Pfam" id="PF22327">
    <property type="entry name" value="Nudt16-like"/>
    <property type="match status" value="1"/>
</dbReference>
<dbReference type="SUPFAM" id="SSF55811">
    <property type="entry name" value="Nudix"/>
    <property type="match status" value="1"/>
</dbReference>
<dbReference type="PROSITE" id="PS51462">
    <property type="entry name" value="NUDIX"/>
    <property type="match status" value="1"/>
</dbReference>
<protein>
    <recommendedName>
        <fullName>U8 snoRNA-decapping enzyme</fullName>
        <ecNumber evidence="3">3.6.1.62</ecNumber>
    </recommendedName>
    <alternativeName>
        <fullName>IDP phosphatase</fullName>
        <shortName>IDPase</shortName>
        <ecNumber evidence="3">3.6.1.64</ecNumber>
    </alternativeName>
    <alternativeName>
        <fullName>Inosine diphosphate phosphatase</fullName>
    </alternativeName>
    <alternativeName>
        <fullName>Nucleoside diphosphate-linked moiety X motif 16</fullName>
        <shortName>Nudix motif 16</shortName>
    </alternativeName>
    <alternativeName>
        <fullName>m7GpppN-mRNA hydrolase</fullName>
    </alternativeName>
</protein>
<gene>
    <name type="primary">NUDT16</name>
</gene>
<feature type="chain" id="PRO_0000344986" description="U8 snoRNA-decapping enzyme">
    <location>
        <begin position="1"/>
        <end position="195"/>
    </location>
</feature>
<feature type="domain" description="Nudix hydrolase" evidence="4">
    <location>
        <begin position="18"/>
        <end position="168"/>
    </location>
</feature>
<feature type="short sequence motif" description="Nudix box">
    <location>
        <begin position="61"/>
        <end position="82"/>
    </location>
</feature>
<feature type="binding site" evidence="2">
    <location>
        <position position="24"/>
    </location>
    <ligand>
        <name>substrate</name>
    </ligand>
</feature>
<feature type="binding site" evidence="2">
    <location>
        <position position="50"/>
    </location>
    <ligand>
        <name>substrate</name>
    </ligand>
</feature>
<feature type="binding site" evidence="3">
    <location>
        <position position="57"/>
    </location>
    <ligand>
        <name>substrate</name>
    </ligand>
</feature>
<feature type="binding site" evidence="3">
    <location>
        <position position="59"/>
    </location>
    <ligand>
        <name>Mn(2+)</name>
        <dbReference type="ChEBI" id="CHEBI:29035"/>
        <label>1</label>
    </ligand>
</feature>
<feature type="binding site" evidence="3">
    <location>
        <position position="76"/>
    </location>
    <ligand>
        <name>Mn(2+)</name>
        <dbReference type="ChEBI" id="CHEBI:29035"/>
        <label>2</label>
    </ligand>
</feature>
<feature type="binding site" evidence="2">
    <location>
        <position position="76"/>
    </location>
    <ligand>
        <name>Mn(2+)</name>
        <dbReference type="ChEBI" id="CHEBI:29035"/>
        <label>3</label>
    </ligand>
</feature>
<feature type="binding site" evidence="3">
    <location>
        <position position="80"/>
    </location>
    <ligand>
        <name>Mn(2+)</name>
        <dbReference type="ChEBI" id="CHEBI:29035"/>
        <label>1</label>
    </ligand>
</feature>
<feature type="binding site" evidence="2">
    <location>
        <position position="80"/>
    </location>
    <ligand>
        <name>Mn(2+)</name>
        <dbReference type="ChEBI" id="CHEBI:29035"/>
        <label>3</label>
    </ligand>
</feature>
<feature type="binding site" evidence="3">
    <location>
        <position position="99"/>
    </location>
    <ligand>
        <name>Mn(2+)</name>
        <dbReference type="ChEBI" id="CHEBI:29035"/>
        <label>4</label>
    </ligand>
</feature>
<feature type="binding site" evidence="2">
    <location>
        <position position="166"/>
    </location>
    <ligand>
        <name>substrate</name>
    </ligand>
</feature>
<feature type="binding site" evidence="2">
    <location>
        <position position="170"/>
    </location>
    <ligand>
        <name>substrate</name>
    </ligand>
</feature>
<feature type="binding site" evidence="3">
    <location>
        <position position="173"/>
    </location>
    <ligand>
        <name>Mn(2+)</name>
        <dbReference type="ChEBI" id="CHEBI:29035"/>
        <label>4</label>
    </ligand>
</feature>
<sequence>MAGMRRLELSEALHLGPGWRHACHALLYAPDPGLLFGRIPLRYAVLMQMRFDGRLGFPGGFVDLRDGSLEDGLNRELGEELGEAAGAFRVERADYRSSHAGSRPRVVAHFYTKLLTLEQLTAVEMGAPRARDHGLEVLGLVRVPLYTLRDGVGGLPAFLENTFIGNAREQLLEAVQNLGLLEPGSFARLKISTPP</sequence>